<feature type="chain" id="PRO_1000070320" description="Ribonuclease Z">
    <location>
        <begin position="1"/>
        <end position="314"/>
    </location>
</feature>
<feature type="active site" description="Proton acceptor" evidence="1">
    <location>
        <position position="66"/>
    </location>
</feature>
<feature type="binding site" evidence="1">
    <location>
        <position position="62"/>
    </location>
    <ligand>
        <name>Zn(2+)</name>
        <dbReference type="ChEBI" id="CHEBI:29105"/>
        <label>1</label>
        <note>catalytic</note>
    </ligand>
</feature>
<feature type="binding site" evidence="1">
    <location>
        <position position="64"/>
    </location>
    <ligand>
        <name>Zn(2+)</name>
        <dbReference type="ChEBI" id="CHEBI:29105"/>
        <label>1</label>
        <note>catalytic</note>
    </ligand>
</feature>
<feature type="binding site" evidence="1">
    <location>
        <position position="66"/>
    </location>
    <ligand>
        <name>Zn(2+)</name>
        <dbReference type="ChEBI" id="CHEBI:29105"/>
        <label>2</label>
        <note>catalytic</note>
    </ligand>
</feature>
<feature type="binding site" evidence="1">
    <location>
        <position position="67"/>
    </location>
    <ligand>
        <name>Zn(2+)</name>
        <dbReference type="ChEBI" id="CHEBI:29105"/>
        <label>2</label>
        <note>catalytic</note>
    </ligand>
</feature>
<feature type="binding site" evidence="1">
    <location>
        <position position="144"/>
    </location>
    <ligand>
        <name>Zn(2+)</name>
        <dbReference type="ChEBI" id="CHEBI:29105"/>
        <label>1</label>
        <note>catalytic</note>
    </ligand>
</feature>
<feature type="binding site" evidence="1">
    <location>
        <position position="215"/>
    </location>
    <ligand>
        <name>Zn(2+)</name>
        <dbReference type="ChEBI" id="CHEBI:29105"/>
        <label>1</label>
        <note>catalytic</note>
    </ligand>
</feature>
<feature type="binding site" evidence="1">
    <location>
        <position position="215"/>
    </location>
    <ligand>
        <name>Zn(2+)</name>
        <dbReference type="ChEBI" id="CHEBI:29105"/>
        <label>2</label>
        <note>catalytic</note>
    </ligand>
</feature>
<feature type="binding site" evidence="1">
    <location>
        <position position="273"/>
    </location>
    <ligand>
        <name>Zn(2+)</name>
        <dbReference type="ChEBI" id="CHEBI:29105"/>
        <label>2</label>
        <note>catalytic</note>
    </ligand>
</feature>
<comment type="function">
    <text evidence="1">Zinc phosphodiesterase, which displays some tRNA 3'-processing endonuclease activity. Probably involved in tRNA maturation, by removing a 3'-trailer from precursor tRNA.</text>
</comment>
<comment type="catalytic activity">
    <reaction evidence="1">
        <text>Endonucleolytic cleavage of RNA, removing extra 3' nucleotides from tRNA precursor, generating 3' termini of tRNAs. A 3'-hydroxy group is left at the tRNA terminus and a 5'-phosphoryl group is left at the trailer molecule.</text>
        <dbReference type="EC" id="3.1.26.11"/>
    </reaction>
</comment>
<comment type="cofactor">
    <cofactor evidence="1">
        <name>Zn(2+)</name>
        <dbReference type="ChEBI" id="CHEBI:29105"/>
    </cofactor>
    <text evidence="1">Binds 2 Zn(2+) ions.</text>
</comment>
<comment type="subunit">
    <text evidence="1">Homodimer.</text>
</comment>
<comment type="similarity">
    <text evidence="1">Belongs to the RNase Z family.</text>
</comment>
<evidence type="ECO:0000255" key="1">
    <source>
        <dbReference type="HAMAP-Rule" id="MF_01818"/>
    </source>
</evidence>
<organism>
    <name type="scientific">Prochlorococcus marinus (strain NATL2A)</name>
    <dbReference type="NCBI Taxonomy" id="59920"/>
    <lineage>
        <taxon>Bacteria</taxon>
        <taxon>Bacillati</taxon>
        <taxon>Cyanobacteriota</taxon>
        <taxon>Cyanophyceae</taxon>
        <taxon>Synechococcales</taxon>
        <taxon>Prochlorococcaceae</taxon>
        <taxon>Prochlorococcus</taxon>
    </lineage>
</organism>
<sequence>MQVTFLGTSSGVPTLNRNVSAMVLKPPQRSELWLFDCGEGTQHQFIRSNLKLSQIKKIFITHMHGDHIYGLPGLLASIGLAGSSSGIELYGPAPLKNFIDSCLYNSSSRLAYSLKFHRVENAANNKEILFEDSELEVKTAPLKHRIPSFAYRVNQKTRPGRFDIEKAKSKGIPPGPVYADLQRGEEVRLEDGRIFSGKEFCGPPRPGVSMVYCTDTVYTESAIEISRKADLLIHESTYSYKETEMAYERGHSTATMAAQIAAKANVDQLILTHLSPRYTPGNQTCPNDLLNEAKAIFPNTQLAKDFLQIDINKS</sequence>
<gene>
    <name evidence="1" type="primary">rnz</name>
    <name type="ordered locus">PMN2A_0920</name>
</gene>
<proteinExistence type="inferred from homology"/>
<keyword id="KW-0255">Endonuclease</keyword>
<keyword id="KW-0378">Hydrolase</keyword>
<keyword id="KW-0479">Metal-binding</keyword>
<keyword id="KW-0540">Nuclease</keyword>
<keyword id="KW-1185">Reference proteome</keyword>
<keyword id="KW-0819">tRNA processing</keyword>
<keyword id="KW-0862">Zinc</keyword>
<accession>Q46JB7</accession>
<protein>
    <recommendedName>
        <fullName evidence="1">Ribonuclease Z</fullName>
        <shortName evidence="1">RNase Z</shortName>
        <ecNumber evidence="1">3.1.26.11</ecNumber>
    </recommendedName>
    <alternativeName>
        <fullName evidence="1">tRNA 3 endonuclease</fullName>
    </alternativeName>
    <alternativeName>
        <fullName evidence="1">tRNase Z</fullName>
    </alternativeName>
</protein>
<dbReference type="EC" id="3.1.26.11" evidence="1"/>
<dbReference type="EMBL" id="CP000095">
    <property type="protein sequence ID" value="AAZ58411.1"/>
    <property type="molecule type" value="Genomic_DNA"/>
</dbReference>
<dbReference type="RefSeq" id="WP_011295268.1">
    <property type="nucleotide sequence ID" value="NC_007335.2"/>
</dbReference>
<dbReference type="SMR" id="Q46JB7"/>
<dbReference type="STRING" id="59920.PMN2A_0920"/>
<dbReference type="KEGG" id="pmn:PMN2A_0920"/>
<dbReference type="HOGENOM" id="CLU_031317_2_0_3"/>
<dbReference type="OrthoDB" id="9800940at2"/>
<dbReference type="PhylomeDB" id="Q46JB7"/>
<dbReference type="Proteomes" id="UP000002535">
    <property type="component" value="Chromosome"/>
</dbReference>
<dbReference type="GO" id="GO:0042781">
    <property type="term" value="F:3'-tRNA processing endoribonuclease activity"/>
    <property type="evidence" value="ECO:0007669"/>
    <property type="project" value="UniProtKB-UniRule"/>
</dbReference>
<dbReference type="GO" id="GO:0008270">
    <property type="term" value="F:zinc ion binding"/>
    <property type="evidence" value="ECO:0007669"/>
    <property type="project" value="UniProtKB-UniRule"/>
</dbReference>
<dbReference type="CDD" id="cd07717">
    <property type="entry name" value="RNaseZ_ZiPD-like_MBL-fold"/>
    <property type="match status" value="1"/>
</dbReference>
<dbReference type="FunFam" id="3.60.15.10:FF:000002">
    <property type="entry name" value="Ribonuclease Z"/>
    <property type="match status" value="1"/>
</dbReference>
<dbReference type="Gene3D" id="3.60.15.10">
    <property type="entry name" value="Ribonuclease Z/Hydroxyacylglutathione hydrolase-like"/>
    <property type="match status" value="1"/>
</dbReference>
<dbReference type="HAMAP" id="MF_01818">
    <property type="entry name" value="RNase_Z_BN"/>
    <property type="match status" value="1"/>
</dbReference>
<dbReference type="InterPro" id="IPR001279">
    <property type="entry name" value="Metallo-B-lactamas"/>
</dbReference>
<dbReference type="InterPro" id="IPR036866">
    <property type="entry name" value="RibonucZ/Hydroxyglut_hydro"/>
</dbReference>
<dbReference type="InterPro" id="IPR013471">
    <property type="entry name" value="RNase_Z/BN"/>
</dbReference>
<dbReference type="NCBIfam" id="NF000801">
    <property type="entry name" value="PRK00055.1-3"/>
    <property type="match status" value="1"/>
</dbReference>
<dbReference type="NCBIfam" id="TIGR02651">
    <property type="entry name" value="RNase_Z"/>
    <property type="match status" value="1"/>
</dbReference>
<dbReference type="PANTHER" id="PTHR46018">
    <property type="entry name" value="ZINC PHOSPHODIESTERASE ELAC PROTEIN 1"/>
    <property type="match status" value="1"/>
</dbReference>
<dbReference type="PANTHER" id="PTHR46018:SF2">
    <property type="entry name" value="ZINC PHOSPHODIESTERASE ELAC PROTEIN 1"/>
    <property type="match status" value="1"/>
</dbReference>
<dbReference type="Pfam" id="PF00753">
    <property type="entry name" value="Lactamase_B"/>
    <property type="match status" value="1"/>
</dbReference>
<dbReference type="Pfam" id="PF12706">
    <property type="entry name" value="Lactamase_B_2"/>
    <property type="match status" value="1"/>
</dbReference>
<dbReference type="SUPFAM" id="SSF56281">
    <property type="entry name" value="Metallo-hydrolase/oxidoreductase"/>
    <property type="match status" value="1"/>
</dbReference>
<name>RNZ_PROMT</name>
<reference key="1">
    <citation type="journal article" date="2007" name="PLoS Genet.">
        <title>Patterns and implications of gene gain and loss in the evolution of Prochlorococcus.</title>
        <authorList>
            <person name="Kettler G.C."/>
            <person name="Martiny A.C."/>
            <person name="Huang K."/>
            <person name="Zucker J."/>
            <person name="Coleman M.L."/>
            <person name="Rodrigue S."/>
            <person name="Chen F."/>
            <person name="Lapidus A."/>
            <person name="Ferriera S."/>
            <person name="Johnson J."/>
            <person name="Steglich C."/>
            <person name="Church G.M."/>
            <person name="Richardson P."/>
            <person name="Chisholm S.W."/>
        </authorList>
    </citation>
    <scope>NUCLEOTIDE SEQUENCE [LARGE SCALE GENOMIC DNA]</scope>
    <source>
        <strain>NATL2A</strain>
    </source>
</reference>